<protein>
    <recommendedName>
        <fullName evidence="1">Translation initiation factor IF-1</fullName>
    </recommendedName>
</protein>
<feature type="chain" id="PRO_0000338842" description="Translation initiation factor IF-1">
    <location>
        <begin position="1"/>
        <end position="72"/>
    </location>
</feature>
<feature type="domain" description="S1-like" evidence="1">
    <location>
        <begin position="1"/>
        <end position="72"/>
    </location>
</feature>
<evidence type="ECO:0000255" key="1">
    <source>
        <dbReference type="HAMAP-Rule" id="MF_00075"/>
    </source>
</evidence>
<sequence length="72" mass="8250">MAKEDNIEMQGTVLETLPNTMFRVELENGHVVTAHISGKMRKNYIRILTGDKVTVELTPYDLSKGRIVFRSR</sequence>
<accession>A6T6Y1</accession>
<organism>
    <name type="scientific">Klebsiella pneumoniae subsp. pneumoniae (strain ATCC 700721 / MGH 78578)</name>
    <dbReference type="NCBI Taxonomy" id="272620"/>
    <lineage>
        <taxon>Bacteria</taxon>
        <taxon>Pseudomonadati</taxon>
        <taxon>Pseudomonadota</taxon>
        <taxon>Gammaproteobacteria</taxon>
        <taxon>Enterobacterales</taxon>
        <taxon>Enterobacteriaceae</taxon>
        <taxon>Klebsiella/Raoultella group</taxon>
        <taxon>Klebsiella</taxon>
        <taxon>Klebsiella pneumoniae complex</taxon>
    </lineage>
</organism>
<keyword id="KW-0963">Cytoplasm</keyword>
<keyword id="KW-0396">Initiation factor</keyword>
<keyword id="KW-0648">Protein biosynthesis</keyword>
<keyword id="KW-0694">RNA-binding</keyword>
<keyword id="KW-0699">rRNA-binding</keyword>
<comment type="function">
    <text evidence="1">One of the essential components for the initiation of protein synthesis. Stabilizes the binding of IF-2 and IF-3 on the 30S subunit to which N-formylmethionyl-tRNA(fMet) subsequently binds. Helps modulate mRNA selection, yielding the 30S pre-initiation complex (PIC). Upon addition of the 50S ribosomal subunit IF-1, IF-2 and IF-3 are released leaving the mature 70S translation initiation complex.</text>
</comment>
<comment type="subunit">
    <text evidence="1">Component of the 30S ribosomal translation pre-initiation complex which assembles on the 30S ribosome in the order IF-2 and IF-3, IF-1 and N-formylmethionyl-tRNA(fMet); mRNA recruitment can occur at any time during PIC assembly.</text>
</comment>
<comment type="subcellular location">
    <subcellularLocation>
        <location evidence="1">Cytoplasm</location>
    </subcellularLocation>
</comment>
<comment type="similarity">
    <text evidence="1">Belongs to the IF-1 family.</text>
</comment>
<name>IF1_KLEP7</name>
<dbReference type="EMBL" id="CP000647">
    <property type="protein sequence ID" value="ABR76352.1"/>
    <property type="molecule type" value="Genomic_DNA"/>
</dbReference>
<dbReference type="RefSeq" id="WP_001040187.1">
    <property type="nucleotide sequence ID" value="NC_009648.1"/>
</dbReference>
<dbReference type="SMR" id="A6T6Y1"/>
<dbReference type="STRING" id="272620.KPN_00916"/>
<dbReference type="jPOST" id="A6T6Y1"/>
<dbReference type="PaxDb" id="272620-KPN_00916"/>
<dbReference type="EnsemblBacteria" id="ABR76352">
    <property type="protein sequence ID" value="ABR76352"/>
    <property type="gene ID" value="KPN_00916"/>
</dbReference>
<dbReference type="GeneID" id="93776536"/>
<dbReference type="KEGG" id="kpn:KPN_00916"/>
<dbReference type="HOGENOM" id="CLU_151267_1_0_6"/>
<dbReference type="Proteomes" id="UP000000265">
    <property type="component" value="Chromosome"/>
</dbReference>
<dbReference type="GO" id="GO:0005829">
    <property type="term" value="C:cytosol"/>
    <property type="evidence" value="ECO:0007669"/>
    <property type="project" value="TreeGrafter"/>
</dbReference>
<dbReference type="GO" id="GO:0043022">
    <property type="term" value="F:ribosome binding"/>
    <property type="evidence" value="ECO:0007669"/>
    <property type="project" value="UniProtKB-UniRule"/>
</dbReference>
<dbReference type="GO" id="GO:0019843">
    <property type="term" value="F:rRNA binding"/>
    <property type="evidence" value="ECO:0007669"/>
    <property type="project" value="UniProtKB-UniRule"/>
</dbReference>
<dbReference type="GO" id="GO:0003743">
    <property type="term" value="F:translation initiation factor activity"/>
    <property type="evidence" value="ECO:0007669"/>
    <property type="project" value="UniProtKB-UniRule"/>
</dbReference>
<dbReference type="CDD" id="cd04451">
    <property type="entry name" value="S1_IF1"/>
    <property type="match status" value="1"/>
</dbReference>
<dbReference type="FunFam" id="2.40.50.140:FF:000002">
    <property type="entry name" value="Translation initiation factor IF-1"/>
    <property type="match status" value="1"/>
</dbReference>
<dbReference type="Gene3D" id="2.40.50.140">
    <property type="entry name" value="Nucleic acid-binding proteins"/>
    <property type="match status" value="1"/>
</dbReference>
<dbReference type="HAMAP" id="MF_00075">
    <property type="entry name" value="IF_1"/>
    <property type="match status" value="1"/>
</dbReference>
<dbReference type="InterPro" id="IPR012340">
    <property type="entry name" value="NA-bd_OB-fold"/>
</dbReference>
<dbReference type="InterPro" id="IPR006196">
    <property type="entry name" value="RNA-binding_domain_S1_IF1"/>
</dbReference>
<dbReference type="InterPro" id="IPR003029">
    <property type="entry name" value="S1_domain"/>
</dbReference>
<dbReference type="InterPro" id="IPR004368">
    <property type="entry name" value="TIF_IF1"/>
</dbReference>
<dbReference type="NCBIfam" id="TIGR00008">
    <property type="entry name" value="infA"/>
    <property type="match status" value="1"/>
</dbReference>
<dbReference type="PANTHER" id="PTHR33370">
    <property type="entry name" value="TRANSLATION INITIATION FACTOR IF-1, CHLOROPLASTIC"/>
    <property type="match status" value="1"/>
</dbReference>
<dbReference type="PANTHER" id="PTHR33370:SF1">
    <property type="entry name" value="TRANSLATION INITIATION FACTOR IF-1, CHLOROPLASTIC"/>
    <property type="match status" value="1"/>
</dbReference>
<dbReference type="Pfam" id="PF01176">
    <property type="entry name" value="eIF-1a"/>
    <property type="match status" value="1"/>
</dbReference>
<dbReference type="SMART" id="SM00316">
    <property type="entry name" value="S1"/>
    <property type="match status" value="1"/>
</dbReference>
<dbReference type="SUPFAM" id="SSF50249">
    <property type="entry name" value="Nucleic acid-binding proteins"/>
    <property type="match status" value="1"/>
</dbReference>
<dbReference type="PROSITE" id="PS50832">
    <property type="entry name" value="S1_IF1_TYPE"/>
    <property type="match status" value="1"/>
</dbReference>
<proteinExistence type="inferred from homology"/>
<gene>
    <name evidence="1" type="primary">infA</name>
    <name type="ordered locus">KPN78578_08910</name>
    <name type="ORF">KPN_00916</name>
</gene>
<reference key="1">
    <citation type="submission" date="2006-09" db="EMBL/GenBank/DDBJ databases">
        <authorList>
            <consortium name="The Klebsiella pneumonia Genome Sequencing Project"/>
            <person name="McClelland M."/>
            <person name="Sanderson E.K."/>
            <person name="Spieth J."/>
            <person name="Clifton W.S."/>
            <person name="Latreille P."/>
            <person name="Sabo A."/>
            <person name="Pepin K."/>
            <person name="Bhonagiri V."/>
            <person name="Porwollik S."/>
            <person name="Ali J."/>
            <person name="Wilson R.K."/>
        </authorList>
    </citation>
    <scope>NUCLEOTIDE SEQUENCE [LARGE SCALE GENOMIC DNA]</scope>
    <source>
        <strain>ATCC 700721 / MGH 78578</strain>
    </source>
</reference>